<dbReference type="EMBL" id="DS499597">
    <property type="protein sequence ID" value="EDP51977.1"/>
    <property type="molecule type" value="Genomic_DNA"/>
</dbReference>
<dbReference type="EnsemblFungi" id="EDP51977">
    <property type="protein sequence ID" value="EDP51977"/>
    <property type="gene ID" value="AFUB_060070"/>
</dbReference>
<dbReference type="HOGENOM" id="CLU_024534_3_0_1"/>
<dbReference type="OrthoDB" id="31386at5052"/>
<dbReference type="PhylomeDB" id="B0Y1E7"/>
<dbReference type="UniPathway" id="UPA00988"/>
<dbReference type="Proteomes" id="UP000001699">
    <property type="component" value="Unassembled WGS sequence"/>
</dbReference>
<dbReference type="GO" id="GO:0005829">
    <property type="term" value="C:cytosol"/>
    <property type="evidence" value="ECO:0000250"/>
    <property type="project" value="UniProtKB"/>
</dbReference>
<dbReference type="GO" id="GO:0016779">
    <property type="term" value="F:nucleotidyltransferase activity"/>
    <property type="evidence" value="ECO:0007669"/>
    <property type="project" value="UniProtKB-UniRule"/>
</dbReference>
<dbReference type="GO" id="GO:0016783">
    <property type="term" value="F:sulfurtransferase activity"/>
    <property type="evidence" value="ECO:0007669"/>
    <property type="project" value="TreeGrafter"/>
</dbReference>
<dbReference type="GO" id="GO:0000049">
    <property type="term" value="F:tRNA binding"/>
    <property type="evidence" value="ECO:0007669"/>
    <property type="project" value="InterPro"/>
</dbReference>
<dbReference type="GO" id="GO:0032447">
    <property type="term" value="P:protein urmylation"/>
    <property type="evidence" value="ECO:0007669"/>
    <property type="project" value="UniProtKB-UniRule"/>
</dbReference>
<dbReference type="GO" id="GO:0034227">
    <property type="term" value="P:tRNA thio-modification"/>
    <property type="evidence" value="ECO:0000250"/>
    <property type="project" value="UniProtKB"/>
</dbReference>
<dbReference type="GO" id="GO:0002143">
    <property type="term" value="P:tRNA wobble position uridine thiolation"/>
    <property type="evidence" value="ECO:0007669"/>
    <property type="project" value="TreeGrafter"/>
</dbReference>
<dbReference type="GO" id="GO:0002098">
    <property type="term" value="P:tRNA wobble uridine modification"/>
    <property type="evidence" value="ECO:0000250"/>
    <property type="project" value="UniProtKB"/>
</dbReference>
<dbReference type="FunFam" id="3.40.50.620:FF:000143">
    <property type="entry name" value="Cytoplasmic tRNA 2-thiolation protein 2"/>
    <property type="match status" value="1"/>
</dbReference>
<dbReference type="Gene3D" id="3.40.50.620">
    <property type="entry name" value="HUPs"/>
    <property type="match status" value="1"/>
</dbReference>
<dbReference type="HAMAP" id="MF_03054">
    <property type="entry name" value="CTU2"/>
    <property type="match status" value="1"/>
</dbReference>
<dbReference type="InterPro" id="IPR019407">
    <property type="entry name" value="CTU2"/>
</dbReference>
<dbReference type="InterPro" id="IPR014729">
    <property type="entry name" value="Rossmann-like_a/b/a_fold"/>
</dbReference>
<dbReference type="PANTHER" id="PTHR20882">
    <property type="entry name" value="CYTOPLASMIC TRNA 2-THIOLATION PROTEIN 2"/>
    <property type="match status" value="1"/>
</dbReference>
<dbReference type="PANTHER" id="PTHR20882:SF14">
    <property type="entry name" value="CYTOPLASMIC TRNA 2-THIOLATION PROTEIN 2"/>
    <property type="match status" value="1"/>
</dbReference>
<dbReference type="Pfam" id="PF10288">
    <property type="entry name" value="CTU2"/>
    <property type="match status" value="1"/>
</dbReference>
<dbReference type="SUPFAM" id="SSF52402">
    <property type="entry name" value="Adenine nucleotide alpha hydrolases-like"/>
    <property type="match status" value="1"/>
</dbReference>
<keyword id="KW-0963">Cytoplasm</keyword>
<keyword id="KW-0819">tRNA processing</keyword>
<protein>
    <recommendedName>
        <fullName evidence="1">Cytoplasmic tRNA 2-thiolation protein 2</fullName>
    </recommendedName>
</protein>
<proteinExistence type="inferred from homology"/>
<gene>
    <name type="primary">ncs2</name>
    <name type="synonym">ctu2</name>
    <name type="ORF">AFUB_060070</name>
</gene>
<comment type="function">
    <text evidence="1">Plays a central role in 2-thiolation of mcm(5)S(2)U at tRNA wobble positions of tRNA(Lys), tRNA(Glu) and tRNA(Gln). May act by forming a heterodimer with ncs6 that ligates sulfur from thiocarboxylated urm1 onto the uridine of tRNAs at wobble position. Prior mcm(5) tRNA modification by the elongator complex is required for 2-thiolation. May also be involved in protein urmylation.</text>
</comment>
<comment type="pathway">
    <text evidence="1">tRNA modification; 5-methoxycarbonylmethyl-2-thiouridine-tRNA biosynthesis.</text>
</comment>
<comment type="subcellular location">
    <subcellularLocation>
        <location evidence="1">Cytoplasm</location>
    </subcellularLocation>
</comment>
<comment type="similarity">
    <text evidence="1">Belongs to the CTU2/NCS2 family.</text>
</comment>
<evidence type="ECO:0000255" key="1">
    <source>
        <dbReference type="HAMAP-Rule" id="MF_03054"/>
    </source>
</evidence>
<feature type="chain" id="PRO_0000369288" description="Cytoplasmic tRNA 2-thiolation protein 2">
    <location>
        <begin position="1"/>
        <end position="364"/>
    </location>
</feature>
<name>CTU2_ASPFC</name>
<reference key="1">
    <citation type="journal article" date="2008" name="PLoS Genet.">
        <title>Genomic islands in the pathogenic filamentous fungus Aspergillus fumigatus.</title>
        <authorList>
            <person name="Fedorova N.D."/>
            <person name="Khaldi N."/>
            <person name="Joardar V.S."/>
            <person name="Maiti R."/>
            <person name="Amedeo P."/>
            <person name="Anderson M.J."/>
            <person name="Crabtree J."/>
            <person name="Silva J.C."/>
            <person name="Badger J.H."/>
            <person name="Albarraq A."/>
            <person name="Angiuoli S."/>
            <person name="Bussey H."/>
            <person name="Bowyer P."/>
            <person name="Cotty P.J."/>
            <person name="Dyer P.S."/>
            <person name="Egan A."/>
            <person name="Galens K."/>
            <person name="Fraser-Liggett C.M."/>
            <person name="Haas B.J."/>
            <person name="Inman J.M."/>
            <person name="Kent R."/>
            <person name="Lemieux S."/>
            <person name="Malavazi I."/>
            <person name="Orvis J."/>
            <person name="Roemer T."/>
            <person name="Ronning C.M."/>
            <person name="Sundaram J.P."/>
            <person name="Sutton G."/>
            <person name="Turner G."/>
            <person name="Venter J.C."/>
            <person name="White O.R."/>
            <person name="Whitty B.R."/>
            <person name="Youngman P."/>
            <person name="Wolfe K.H."/>
            <person name="Goldman G.H."/>
            <person name="Wortman J.R."/>
            <person name="Jiang B."/>
            <person name="Denning D.W."/>
            <person name="Nierman W.C."/>
        </authorList>
    </citation>
    <scope>NUCLEOTIDE SEQUENCE [LARGE SCALE GENOMIC DNA]</scope>
    <source>
        <strain>CBS 144.89 / FGSC A1163 / CEA10</strain>
    </source>
</reference>
<organism>
    <name type="scientific">Aspergillus fumigatus (strain CBS 144.89 / FGSC A1163 / CEA10)</name>
    <name type="common">Neosartorya fumigata</name>
    <dbReference type="NCBI Taxonomy" id="451804"/>
    <lineage>
        <taxon>Eukaryota</taxon>
        <taxon>Fungi</taxon>
        <taxon>Dikarya</taxon>
        <taxon>Ascomycota</taxon>
        <taxon>Pezizomycotina</taxon>
        <taxon>Eurotiomycetes</taxon>
        <taxon>Eurotiomycetidae</taxon>
        <taxon>Eurotiales</taxon>
        <taxon>Aspergillaceae</taxon>
        <taxon>Aspergillus</taxon>
        <taxon>Aspergillus subgen. Fumigati</taxon>
    </lineage>
</organism>
<accession>B0Y1E7</accession>
<sequence length="364" mass="40517">MQVCWFERFGGGNQLLTVLSSSRTCYARFVNFKVFKRMENYRLRRNMPRTGPCKLLLPLSCGISSSVLLHILNAQIQHELAKSHPSPGFDLHLLVIEPSSISHSSLSYDEGFELLQQTFPLHSFTRIPLHSIFELDPELQEVISQFSKDGFVDDTGLSAKERLDAFRASIPTSTSKVDVDYILITRLVVAFAKKIACRGVLWGDTDTRLAAKTLANVAKGRGSSLTWQVCDGMSPFGVEFNFPLRDLFKAEVDNYASFFPELTRIIIPDEPPSENVLTKNLSIDELMMRYVQTQGEKYPGVMANVTRTASKLQASLMPANVPQCSFCGAFMLNSGNNDGGDTTGASRALELCYACIRSRPELTC</sequence>